<organism>
    <name type="scientific">Mycosarcoma maydis</name>
    <name type="common">Corn smut fungus</name>
    <name type="synonym">Ustilago maydis</name>
    <dbReference type="NCBI Taxonomy" id="5270"/>
    <lineage>
        <taxon>Eukaryota</taxon>
        <taxon>Fungi</taxon>
        <taxon>Dikarya</taxon>
        <taxon>Basidiomycota</taxon>
        <taxon>Ustilaginomycotina</taxon>
        <taxon>Ustilaginomycetes</taxon>
        <taxon>Ustilaginales</taxon>
        <taxon>Ustilaginaceae</taxon>
        <taxon>Mycosarcoma</taxon>
    </lineage>
</organism>
<feature type="chain" id="PRO_0000119285" description="General transcription and DNA repair factor IIH subunit TFB5">
    <location>
        <begin position="1"/>
        <end position="65"/>
    </location>
</feature>
<name>TFB5_MYCMD</name>
<proteinExistence type="inferred from homology"/>
<keyword id="KW-0227">DNA damage</keyword>
<keyword id="KW-0234">DNA repair</keyword>
<keyword id="KW-0539">Nucleus</keyword>
<keyword id="KW-1185">Reference proteome</keyword>
<keyword id="KW-0804">Transcription</keyword>
<keyword id="KW-0805">Transcription regulation</keyword>
<reference key="1">
    <citation type="journal article" date="2006" name="Nature">
        <title>Insights from the genome of the biotrophic fungal plant pathogen Ustilago maydis.</title>
        <authorList>
            <person name="Kaemper J."/>
            <person name="Kahmann R."/>
            <person name="Boelker M."/>
            <person name="Ma L.-J."/>
            <person name="Brefort T."/>
            <person name="Saville B.J."/>
            <person name="Banuett F."/>
            <person name="Kronstad J.W."/>
            <person name="Gold S.E."/>
            <person name="Mueller O."/>
            <person name="Perlin M.H."/>
            <person name="Woesten H.A.B."/>
            <person name="de Vries R."/>
            <person name="Ruiz-Herrera J."/>
            <person name="Reynaga-Pena C.G."/>
            <person name="Snetselaar K."/>
            <person name="McCann M."/>
            <person name="Perez-Martin J."/>
            <person name="Feldbruegge M."/>
            <person name="Basse C.W."/>
            <person name="Steinberg G."/>
            <person name="Ibeas J.I."/>
            <person name="Holloman W."/>
            <person name="Guzman P."/>
            <person name="Farman M.L."/>
            <person name="Stajich J.E."/>
            <person name="Sentandreu R."/>
            <person name="Gonzalez-Prieto J.M."/>
            <person name="Kennell J.C."/>
            <person name="Molina L."/>
            <person name="Schirawski J."/>
            <person name="Mendoza-Mendoza A."/>
            <person name="Greilinger D."/>
            <person name="Muench K."/>
            <person name="Roessel N."/>
            <person name="Scherer M."/>
            <person name="Vranes M."/>
            <person name="Ladendorf O."/>
            <person name="Vincon V."/>
            <person name="Fuchs U."/>
            <person name="Sandrock B."/>
            <person name="Meng S."/>
            <person name="Ho E.C.H."/>
            <person name="Cahill M.J."/>
            <person name="Boyce K.J."/>
            <person name="Klose J."/>
            <person name="Klosterman S.J."/>
            <person name="Deelstra H.J."/>
            <person name="Ortiz-Castellanos L."/>
            <person name="Li W."/>
            <person name="Sanchez-Alonso P."/>
            <person name="Schreier P.H."/>
            <person name="Haeuser-Hahn I."/>
            <person name="Vaupel M."/>
            <person name="Koopmann E."/>
            <person name="Friedrich G."/>
            <person name="Voss H."/>
            <person name="Schlueter T."/>
            <person name="Margolis J."/>
            <person name="Platt D."/>
            <person name="Swimmer C."/>
            <person name="Gnirke A."/>
            <person name="Chen F."/>
            <person name="Vysotskaia V."/>
            <person name="Mannhaupt G."/>
            <person name="Gueldener U."/>
            <person name="Muensterkoetter M."/>
            <person name="Haase D."/>
            <person name="Oesterheld M."/>
            <person name="Mewes H.-W."/>
            <person name="Mauceli E.W."/>
            <person name="DeCaprio D."/>
            <person name="Wade C.M."/>
            <person name="Butler J."/>
            <person name="Young S.K."/>
            <person name="Jaffe D.B."/>
            <person name="Calvo S.E."/>
            <person name="Nusbaum C."/>
            <person name="Galagan J.E."/>
            <person name="Birren B.W."/>
        </authorList>
    </citation>
    <scope>NUCLEOTIDE SEQUENCE [LARGE SCALE GENOMIC DNA]</scope>
    <source>
        <strain>DSM 14603 / FGSC 9021 / UM521</strain>
    </source>
</reference>
<reference key="2">
    <citation type="submission" date="2014-09" db="EMBL/GenBank/DDBJ databases">
        <authorList>
            <person name="Gueldener U."/>
            <person name="Muensterkoetter M."/>
            <person name="Walter M.C."/>
            <person name="Mannhaupt G."/>
            <person name="Kahmann R."/>
        </authorList>
    </citation>
    <scope>GENOME REANNOTATION</scope>
    <source>
        <strain>DSM 14603 / FGSC 9021 / UM521</strain>
    </source>
</reference>
<sequence length="65" mass="7636">MKAYKGMLLTCDAAVKQLILSLDERNRFIIMDLDETHLLISPDRIDWLRAELEVELEKNTYTLEP</sequence>
<dbReference type="EMBL" id="CM003147">
    <property type="protein sequence ID" value="KIS68762.1"/>
    <property type="molecule type" value="Genomic_DNA"/>
</dbReference>
<dbReference type="RefSeq" id="XP_011389805.1">
    <property type="nucleotide sequence ID" value="XM_011391503.1"/>
</dbReference>
<dbReference type="SMR" id="Q4P985"/>
<dbReference type="STRING" id="237631.Q4P985"/>
<dbReference type="EnsemblFungi" id="KIS68762">
    <property type="protein sequence ID" value="KIS68762"/>
    <property type="gene ID" value="UMAG_10654"/>
</dbReference>
<dbReference type="GeneID" id="23566654"/>
<dbReference type="KEGG" id="uma:UMAG_10654"/>
<dbReference type="VEuPathDB" id="FungiDB:UMAG_10654"/>
<dbReference type="eggNOG" id="ENOG502SBQE">
    <property type="taxonomic scope" value="Eukaryota"/>
</dbReference>
<dbReference type="InParanoid" id="Q4P985"/>
<dbReference type="OrthoDB" id="354at2759"/>
<dbReference type="Proteomes" id="UP000000561">
    <property type="component" value="Chromosome 8"/>
</dbReference>
<dbReference type="GO" id="GO:0000439">
    <property type="term" value="C:transcription factor TFIIH core complex"/>
    <property type="evidence" value="ECO:0000318"/>
    <property type="project" value="GO_Central"/>
</dbReference>
<dbReference type="GO" id="GO:0005675">
    <property type="term" value="C:transcription factor TFIIH holo complex"/>
    <property type="evidence" value="ECO:0000318"/>
    <property type="project" value="GO_Central"/>
</dbReference>
<dbReference type="GO" id="GO:0006294">
    <property type="term" value="P:nucleotide-excision repair, preincision complex assembly"/>
    <property type="evidence" value="ECO:0000318"/>
    <property type="project" value="GO_Central"/>
</dbReference>
<dbReference type="GO" id="GO:0006366">
    <property type="term" value="P:transcription by RNA polymerase II"/>
    <property type="evidence" value="ECO:0000318"/>
    <property type="project" value="GO_Central"/>
</dbReference>
<dbReference type="GO" id="GO:0006367">
    <property type="term" value="P:transcription initiation at RNA polymerase II promoter"/>
    <property type="evidence" value="ECO:0007669"/>
    <property type="project" value="InterPro"/>
</dbReference>
<dbReference type="Gene3D" id="3.30.70.1220">
    <property type="entry name" value="TFB5-like"/>
    <property type="match status" value="1"/>
</dbReference>
<dbReference type="InterPro" id="IPR035935">
    <property type="entry name" value="TFB5-like_sf"/>
</dbReference>
<dbReference type="InterPro" id="IPR009400">
    <property type="entry name" value="TFIIH_TTDA/Tfb5"/>
</dbReference>
<dbReference type="PANTHER" id="PTHR28580">
    <property type="entry name" value="GENERAL TRANSCRIPTION FACTOR IIH SUBUNIT 5"/>
    <property type="match status" value="1"/>
</dbReference>
<dbReference type="PANTHER" id="PTHR28580:SF1">
    <property type="entry name" value="GENERAL TRANSCRIPTION FACTOR IIH SUBUNIT 5"/>
    <property type="match status" value="1"/>
</dbReference>
<dbReference type="Pfam" id="PF06331">
    <property type="entry name" value="Tfb5"/>
    <property type="match status" value="1"/>
</dbReference>
<dbReference type="SMART" id="SM01395">
    <property type="entry name" value="Tbf5"/>
    <property type="match status" value="1"/>
</dbReference>
<dbReference type="SUPFAM" id="SSF142897">
    <property type="entry name" value="TFB5-like"/>
    <property type="match status" value="1"/>
</dbReference>
<gene>
    <name type="primary">TFB5</name>
    <name type="ORF">UMAG_10654</name>
</gene>
<evidence type="ECO:0000250" key="1"/>
<evidence type="ECO:0000250" key="2">
    <source>
        <dbReference type="UniProtKB" id="Q3E7C1"/>
    </source>
</evidence>
<evidence type="ECO:0000305" key="3"/>
<accession>Q4P985</accession>
<accession>A0A0D1C505</accession>
<protein>
    <recommendedName>
        <fullName>General transcription and DNA repair factor IIH subunit TFB5</fullName>
        <shortName>TFIIH subunit TFB5</shortName>
    </recommendedName>
    <alternativeName>
        <fullName>RNA polymerase II transcription factor B subunit 5</fullName>
    </alternativeName>
</protein>
<comment type="function">
    <text evidence="2">Component of the general transcription and DNA repair factor IIH (TFIIH) core complex, which is involved in general and transcription-coupled nucleotide excision repair (NER) of damaged DNA and, when complexed to TFIIK, in RNA transcription by RNA polymerase II. In NER, TFIIH acts by opening DNA around the lesion to allow the excision of the damaged oligonucleotide and its replacement by a new DNA fragment. In transcription, TFIIH has an essential role in transcription initiation. When the pre-initiation complex (PIC) has been established, TFIIH is required for promoter opening and promoter escape. Phosphorylation of the C-terminal tail (CTD) of the largest subunit of RNA polymerase II by the kinase module TFIIK controls the initiation of transcription.</text>
</comment>
<comment type="subunit">
    <text evidence="2">Component of the 7-subunit TFIIH core complex composed of XPB/SSL2, XPD/RAD3, SSL1, TFB1, TFB2, TFB4 and TFB5, which is active in NER. The core complex associates with the 3-subunit CTD-kinase module TFIIK composed of CCL1, KIN28 and TFB3 to form the 10-subunit holoenzyme (holo-TFIIH) active in transcription.</text>
</comment>
<comment type="subcellular location">
    <subcellularLocation>
        <location evidence="1">Nucleus</location>
    </subcellularLocation>
</comment>
<comment type="similarity">
    <text evidence="3">Belongs to the TFB5 family.</text>
</comment>